<evidence type="ECO:0000250" key="1"/>
<evidence type="ECO:0000255" key="2"/>
<evidence type="ECO:0000305" key="3"/>
<organism>
    <name type="scientific">Francisella novicida</name>
    <dbReference type="NCBI Taxonomy" id="264"/>
    <lineage>
        <taxon>Bacteria</taxon>
        <taxon>Pseudomonadati</taxon>
        <taxon>Pseudomonadota</taxon>
        <taxon>Gammaproteobacteria</taxon>
        <taxon>Thiotrichales</taxon>
        <taxon>Francisellaceae</taxon>
        <taxon>Francisella</taxon>
    </lineage>
</organism>
<reference key="1">
    <citation type="journal article" date="1994" name="Microbiology">
        <title>Serum-sensitive mutation of Francisella novicida: association with an ABC transporter gene.</title>
        <authorList>
            <person name="Mdluli K.E."/>
            <person name="Anthony L.S."/>
            <person name="Baron G.S."/>
            <person name="McDonald M.K."/>
            <person name="Myltseva S.V."/>
            <person name="Nano F.E."/>
        </authorList>
    </citation>
    <scope>NUCLEOTIDE SEQUENCE [GENOMIC DNA]</scope>
    <source>
        <strain>U112</strain>
    </source>
</reference>
<protein>
    <recommendedName>
        <fullName>Tetraacyldisaccharide 4'-kinase</fullName>
        <ecNumber>2.7.1.130</ecNumber>
    </recommendedName>
    <alternativeName>
        <fullName>Lipid A 4'-kinase</fullName>
    </alternativeName>
</protein>
<sequence length="322" mass="36145">MLDKIWYRSKPNLLSRVLQPISLVFIDIANKRKIKQQLKQYKSKIPIIVVGNISVGGTGKTPVVRMLAQQYLAQGKKPAIISRGYGAKADNYPFEVTSGTLATQCGDEPAMLFDALQAQVPIVIAPERVQAVKYIEKNFPDTDIIISDDGLQHYKLARDKEIVVVDAIRMFGNKLCLPAGPLREPIERLKEVDQIIVIGNCSDKDKELLKNYKNVTYAKVVATEFVNILTAKKVAKTEFNHQNVIAIAGIGNPTKFFKTLEESAINITAKKVFKDHHKFTQSDFEGIDSDITVVMTYKDAIKCKNFAKANWWYLDIALDINV</sequence>
<feature type="chain" id="PRO_0000190926" description="Tetraacyldisaccharide 4'-kinase">
    <location>
        <begin position="1"/>
        <end position="322"/>
    </location>
</feature>
<feature type="binding site" evidence="2">
    <location>
        <begin position="54"/>
        <end position="61"/>
    </location>
    <ligand>
        <name>ATP</name>
        <dbReference type="ChEBI" id="CHEBI:30616"/>
    </ligand>
</feature>
<accession>Q47909</accession>
<proteinExistence type="inferred from homology"/>
<keyword id="KW-0067">ATP-binding</keyword>
<keyword id="KW-0418">Kinase</keyword>
<keyword id="KW-0441">Lipid A biosynthesis</keyword>
<keyword id="KW-0444">Lipid biosynthesis</keyword>
<keyword id="KW-0443">Lipid metabolism</keyword>
<keyword id="KW-0547">Nucleotide-binding</keyword>
<keyword id="KW-0808">Transferase</keyword>
<comment type="function">
    <text evidence="1">Transfers the gamma-phosphate of ATP to the 4'-position of a tetraacyldisaccharide 1-phosphate intermediate (termed DS-1-P) to form tetraacyldisaccharide 1,4'-bis-phosphate (lipid IVA).</text>
</comment>
<comment type="catalytic activity">
    <reaction>
        <text>a lipid A disaccharide + ATP = a lipid IVA + ADP + H(+)</text>
        <dbReference type="Rhea" id="RHEA:67840"/>
        <dbReference type="ChEBI" id="CHEBI:15378"/>
        <dbReference type="ChEBI" id="CHEBI:30616"/>
        <dbReference type="ChEBI" id="CHEBI:176343"/>
        <dbReference type="ChEBI" id="CHEBI:176425"/>
        <dbReference type="ChEBI" id="CHEBI:456216"/>
        <dbReference type="EC" id="2.7.1.130"/>
    </reaction>
</comment>
<comment type="pathway">
    <text>Glycolipid biosynthesis; lipid IV(A) biosynthesis; lipid IV(A) from (3R)-3-hydroxytetradecanoyl-[acyl-carrier-protein] and UDP-N-acetyl-alpha-D-glucosamine: step 6/6.</text>
</comment>
<comment type="similarity">
    <text evidence="3">Belongs to the LpxK family.</text>
</comment>
<dbReference type="EC" id="2.7.1.130"/>
<dbReference type="EMBL" id="L17003">
    <property type="protein sequence ID" value="AAD15238.1"/>
    <property type="molecule type" value="Genomic_DNA"/>
</dbReference>
<dbReference type="RefSeq" id="WP_003041158.1">
    <property type="nucleotide sequence ID" value="NZ_JACVMD010000017.1"/>
</dbReference>
<dbReference type="SMR" id="Q47909"/>
<dbReference type="STRING" id="676032.FN3523_1669"/>
<dbReference type="UniPathway" id="UPA00359">
    <property type="reaction ID" value="UER00482"/>
</dbReference>
<dbReference type="GO" id="GO:0005886">
    <property type="term" value="C:plasma membrane"/>
    <property type="evidence" value="ECO:0007669"/>
    <property type="project" value="TreeGrafter"/>
</dbReference>
<dbReference type="GO" id="GO:0005524">
    <property type="term" value="F:ATP binding"/>
    <property type="evidence" value="ECO:0007669"/>
    <property type="project" value="UniProtKB-UniRule"/>
</dbReference>
<dbReference type="GO" id="GO:0009029">
    <property type="term" value="F:tetraacyldisaccharide 4'-kinase activity"/>
    <property type="evidence" value="ECO:0007669"/>
    <property type="project" value="UniProtKB-UniRule"/>
</dbReference>
<dbReference type="GO" id="GO:0009245">
    <property type="term" value="P:lipid A biosynthetic process"/>
    <property type="evidence" value="ECO:0007669"/>
    <property type="project" value="UniProtKB-UniRule"/>
</dbReference>
<dbReference type="GO" id="GO:0009244">
    <property type="term" value="P:lipopolysaccharide core region biosynthetic process"/>
    <property type="evidence" value="ECO:0007669"/>
    <property type="project" value="TreeGrafter"/>
</dbReference>
<dbReference type="HAMAP" id="MF_00409">
    <property type="entry name" value="LpxK"/>
    <property type="match status" value="1"/>
</dbReference>
<dbReference type="InterPro" id="IPR003758">
    <property type="entry name" value="LpxK"/>
</dbReference>
<dbReference type="InterPro" id="IPR027417">
    <property type="entry name" value="P-loop_NTPase"/>
</dbReference>
<dbReference type="NCBIfam" id="TIGR00682">
    <property type="entry name" value="lpxK"/>
    <property type="match status" value="1"/>
</dbReference>
<dbReference type="PANTHER" id="PTHR42724">
    <property type="entry name" value="TETRAACYLDISACCHARIDE 4'-KINASE"/>
    <property type="match status" value="1"/>
</dbReference>
<dbReference type="PANTHER" id="PTHR42724:SF1">
    <property type="entry name" value="TETRAACYLDISACCHARIDE 4'-KINASE, MITOCHONDRIAL-RELATED"/>
    <property type="match status" value="1"/>
</dbReference>
<dbReference type="Pfam" id="PF02606">
    <property type="entry name" value="LpxK"/>
    <property type="match status" value="1"/>
</dbReference>
<dbReference type="SUPFAM" id="SSF52540">
    <property type="entry name" value="P-loop containing nucleoside triphosphate hydrolases"/>
    <property type="match status" value="1"/>
</dbReference>
<name>LPXK_FRANO</name>
<gene>
    <name type="primary">lpxK</name>
    <name type="synonym">valB</name>
</gene>